<keyword id="KW-0963">Cytoplasm</keyword>
<keyword id="KW-0378">Hydrolase</keyword>
<keyword id="KW-0645">Protease</keyword>
<keyword id="KW-0788">Thiol protease</keyword>
<accession>B5FEA5</accession>
<sequence length="212" mass="22804">MKKILITGFEPFGNDKINPALEAVKLIAGRKLNGGEIVICQVPVVRYKSIETVKQAIEEQQPYAVITVGQASGRAAITPERIAINVDDFRIPDNEGIQVIDEPVVAGGPDAYFTTLPIKAMVSEIQAQGIPATVSNTAGTFVCNHLFYGIQHYLKDTNVRHGFVHIPLLPEQSVDGSQPTMKLEQIAEGLAIAAQAIIDNDSDIQQGAGTIC</sequence>
<organism>
    <name type="scientific">Aliivibrio fischeri (strain MJ11)</name>
    <name type="common">Vibrio fischeri</name>
    <dbReference type="NCBI Taxonomy" id="388396"/>
    <lineage>
        <taxon>Bacteria</taxon>
        <taxon>Pseudomonadati</taxon>
        <taxon>Pseudomonadota</taxon>
        <taxon>Gammaproteobacteria</taxon>
        <taxon>Vibrionales</taxon>
        <taxon>Vibrionaceae</taxon>
        <taxon>Aliivibrio</taxon>
    </lineage>
</organism>
<proteinExistence type="inferred from homology"/>
<reference key="1">
    <citation type="submission" date="2008-08" db="EMBL/GenBank/DDBJ databases">
        <title>Complete sequence of Vibrio fischeri strain MJ11.</title>
        <authorList>
            <person name="Mandel M.J."/>
            <person name="Stabb E.V."/>
            <person name="Ruby E.G."/>
            <person name="Ferriera S."/>
            <person name="Johnson J."/>
            <person name="Kravitz S."/>
            <person name="Beeson K."/>
            <person name="Sutton G."/>
            <person name="Rogers Y.-H."/>
            <person name="Friedman R."/>
            <person name="Frazier M."/>
            <person name="Venter J.C."/>
        </authorList>
    </citation>
    <scope>NUCLEOTIDE SEQUENCE [LARGE SCALE GENOMIC DNA]</scope>
    <source>
        <strain>MJ11</strain>
    </source>
</reference>
<gene>
    <name evidence="1" type="primary">pcp</name>
    <name type="ordered locus">VFMJ11_1451</name>
</gene>
<comment type="function">
    <text evidence="1">Removes 5-oxoproline from various penultimate amino acid residues except L-proline.</text>
</comment>
<comment type="catalytic activity">
    <reaction evidence="1">
        <text>Release of an N-terminal pyroglutamyl group from a polypeptide, the second amino acid generally not being Pro.</text>
        <dbReference type="EC" id="3.4.19.3"/>
    </reaction>
</comment>
<comment type="subunit">
    <text evidence="1">Homotetramer.</text>
</comment>
<comment type="subcellular location">
    <subcellularLocation>
        <location evidence="1">Cytoplasm</location>
    </subcellularLocation>
</comment>
<comment type="similarity">
    <text evidence="1">Belongs to the peptidase C15 family.</text>
</comment>
<protein>
    <recommendedName>
        <fullName evidence="1">Pyrrolidone-carboxylate peptidase</fullName>
        <ecNumber evidence="1">3.4.19.3</ecNumber>
    </recommendedName>
    <alternativeName>
        <fullName evidence="1">5-oxoprolyl-peptidase</fullName>
    </alternativeName>
    <alternativeName>
        <fullName evidence="1">Pyroglutamyl-peptidase I</fullName>
        <shortName evidence="1">PGP-I</shortName>
        <shortName evidence="1">Pyrase</shortName>
    </alternativeName>
</protein>
<name>PCP_ALIFM</name>
<feature type="chain" id="PRO_1000124008" description="Pyrrolidone-carboxylate peptidase">
    <location>
        <begin position="1"/>
        <end position="212"/>
    </location>
</feature>
<feature type="active site" evidence="1">
    <location>
        <position position="80"/>
    </location>
</feature>
<feature type="active site" evidence="1">
    <location>
        <position position="143"/>
    </location>
</feature>
<feature type="active site" evidence="1">
    <location>
        <position position="165"/>
    </location>
</feature>
<evidence type="ECO:0000255" key="1">
    <source>
        <dbReference type="HAMAP-Rule" id="MF_00417"/>
    </source>
</evidence>
<dbReference type="EC" id="3.4.19.3" evidence="1"/>
<dbReference type="EMBL" id="CP001139">
    <property type="protein sequence ID" value="ACH65612.1"/>
    <property type="molecule type" value="Genomic_DNA"/>
</dbReference>
<dbReference type="RefSeq" id="WP_005419351.1">
    <property type="nucleotide sequence ID" value="NC_011184.1"/>
</dbReference>
<dbReference type="SMR" id="B5FEA5"/>
<dbReference type="MEROPS" id="C15.001"/>
<dbReference type="GeneID" id="54164039"/>
<dbReference type="KEGG" id="vfm:VFMJ11_1451"/>
<dbReference type="HOGENOM" id="CLU_043960_4_0_6"/>
<dbReference type="Proteomes" id="UP000001857">
    <property type="component" value="Chromosome I"/>
</dbReference>
<dbReference type="GO" id="GO:0005829">
    <property type="term" value="C:cytosol"/>
    <property type="evidence" value="ECO:0007669"/>
    <property type="project" value="InterPro"/>
</dbReference>
<dbReference type="GO" id="GO:0016920">
    <property type="term" value="F:pyroglutamyl-peptidase activity"/>
    <property type="evidence" value="ECO:0007669"/>
    <property type="project" value="UniProtKB-UniRule"/>
</dbReference>
<dbReference type="GO" id="GO:0006508">
    <property type="term" value="P:proteolysis"/>
    <property type="evidence" value="ECO:0007669"/>
    <property type="project" value="UniProtKB-KW"/>
</dbReference>
<dbReference type="CDD" id="cd00501">
    <property type="entry name" value="Peptidase_C15"/>
    <property type="match status" value="1"/>
</dbReference>
<dbReference type="FunFam" id="3.40.630.20:FF:000001">
    <property type="entry name" value="Pyrrolidone-carboxylate peptidase"/>
    <property type="match status" value="1"/>
</dbReference>
<dbReference type="Gene3D" id="3.40.630.20">
    <property type="entry name" value="Peptidase C15, pyroglutamyl peptidase I-like"/>
    <property type="match status" value="1"/>
</dbReference>
<dbReference type="HAMAP" id="MF_00417">
    <property type="entry name" value="Pyrrolid_peptidase"/>
    <property type="match status" value="1"/>
</dbReference>
<dbReference type="InterPro" id="IPR000816">
    <property type="entry name" value="Peptidase_C15"/>
</dbReference>
<dbReference type="InterPro" id="IPR016125">
    <property type="entry name" value="Peptidase_C15-like"/>
</dbReference>
<dbReference type="InterPro" id="IPR036440">
    <property type="entry name" value="Peptidase_C15-like_sf"/>
</dbReference>
<dbReference type="InterPro" id="IPR029762">
    <property type="entry name" value="PGP-I_bact-type"/>
</dbReference>
<dbReference type="InterPro" id="IPR033694">
    <property type="entry name" value="PGPEP1_Cys_AS"/>
</dbReference>
<dbReference type="NCBIfam" id="NF009676">
    <property type="entry name" value="PRK13197.1"/>
    <property type="match status" value="1"/>
</dbReference>
<dbReference type="NCBIfam" id="TIGR00504">
    <property type="entry name" value="pyro_pdase"/>
    <property type="match status" value="1"/>
</dbReference>
<dbReference type="PANTHER" id="PTHR23402">
    <property type="entry name" value="PROTEASE FAMILY C15 PYROGLUTAMYL-PEPTIDASE I-RELATED"/>
    <property type="match status" value="1"/>
</dbReference>
<dbReference type="PANTHER" id="PTHR23402:SF1">
    <property type="entry name" value="PYROGLUTAMYL-PEPTIDASE I"/>
    <property type="match status" value="1"/>
</dbReference>
<dbReference type="Pfam" id="PF01470">
    <property type="entry name" value="Peptidase_C15"/>
    <property type="match status" value="1"/>
</dbReference>
<dbReference type="PIRSF" id="PIRSF015592">
    <property type="entry name" value="Prld-crbxl_pptds"/>
    <property type="match status" value="1"/>
</dbReference>
<dbReference type="PRINTS" id="PR00706">
    <property type="entry name" value="PYROGLUPTASE"/>
</dbReference>
<dbReference type="SUPFAM" id="SSF53182">
    <property type="entry name" value="Pyrrolidone carboxyl peptidase (pyroglutamate aminopeptidase)"/>
    <property type="match status" value="1"/>
</dbReference>
<dbReference type="PROSITE" id="PS01334">
    <property type="entry name" value="PYRASE_CYS"/>
    <property type="match status" value="1"/>
</dbReference>